<proteinExistence type="inferred from homology"/>
<gene>
    <name type="primary">pcp</name>
    <name type="ordered locus">BH3631</name>
</gene>
<evidence type="ECO:0000250" key="1"/>
<evidence type="ECO:0000305" key="2"/>
<dbReference type="EC" id="3.4.19.3"/>
<dbReference type="EMBL" id="BA000004">
    <property type="protein sequence ID" value="BAB07350.1"/>
    <property type="molecule type" value="Genomic_DNA"/>
</dbReference>
<dbReference type="PIR" id="G84103">
    <property type="entry name" value="G84103"/>
</dbReference>
<dbReference type="RefSeq" id="WP_010899759.1">
    <property type="nucleotide sequence ID" value="NC_002570.2"/>
</dbReference>
<dbReference type="SMR" id="Q9K6U4"/>
<dbReference type="STRING" id="272558.gene:10729544"/>
<dbReference type="MEROPS" id="C15.001"/>
<dbReference type="KEGG" id="bha:BH3631"/>
<dbReference type="eggNOG" id="COG2039">
    <property type="taxonomic scope" value="Bacteria"/>
</dbReference>
<dbReference type="HOGENOM" id="CLU_043960_4_3_9"/>
<dbReference type="OrthoDB" id="9779738at2"/>
<dbReference type="Proteomes" id="UP000001258">
    <property type="component" value="Chromosome"/>
</dbReference>
<dbReference type="GO" id="GO:0005829">
    <property type="term" value="C:cytosol"/>
    <property type="evidence" value="ECO:0007669"/>
    <property type="project" value="InterPro"/>
</dbReference>
<dbReference type="GO" id="GO:0016920">
    <property type="term" value="F:pyroglutamyl-peptidase activity"/>
    <property type="evidence" value="ECO:0007669"/>
    <property type="project" value="UniProtKB-UniRule"/>
</dbReference>
<dbReference type="GO" id="GO:0006508">
    <property type="term" value="P:proteolysis"/>
    <property type="evidence" value="ECO:0007669"/>
    <property type="project" value="UniProtKB-KW"/>
</dbReference>
<dbReference type="CDD" id="cd00501">
    <property type="entry name" value="Peptidase_C15"/>
    <property type="match status" value="1"/>
</dbReference>
<dbReference type="Gene3D" id="3.40.630.20">
    <property type="entry name" value="Peptidase C15, pyroglutamyl peptidase I-like"/>
    <property type="match status" value="1"/>
</dbReference>
<dbReference type="HAMAP" id="MF_00417">
    <property type="entry name" value="Pyrrolid_peptidase"/>
    <property type="match status" value="1"/>
</dbReference>
<dbReference type="InterPro" id="IPR000816">
    <property type="entry name" value="Peptidase_C15"/>
</dbReference>
<dbReference type="InterPro" id="IPR016125">
    <property type="entry name" value="Peptidase_C15-like"/>
</dbReference>
<dbReference type="InterPro" id="IPR036440">
    <property type="entry name" value="Peptidase_C15-like_sf"/>
</dbReference>
<dbReference type="InterPro" id="IPR029762">
    <property type="entry name" value="PGP-I_bact-type"/>
</dbReference>
<dbReference type="InterPro" id="IPR033694">
    <property type="entry name" value="PGPEP1_Cys_AS"/>
</dbReference>
<dbReference type="InterPro" id="IPR033693">
    <property type="entry name" value="PGPEP1_Glu_AS"/>
</dbReference>
<dbReference type="NCBIfam" id="NF009676">
    <property type="entry name" value="PRK13197.1"/>
    <property type="match status" value="1"/>
</dbReference>
<dbReference type="NCBIfam" id="TIGR00504">
    <property type="entry name" value="pyro_pdase"/>
    <property type="match status" value="1"/>
</dbReference>
<dbReference type="PANTHER" id="PTHR23402">
    <property type="entry name" value="PROTEASE FAMILY C15 PYROGLUTAMYL-PEPTIDASE I-RELATED"/>
    <property type="match status" value="1"/>
</dbReference>
<dbReference type="PANTHER" id="PTHR23402:SF1">
    <property type="entry name" value="PYROGLUTAMYL-PEPTIDASE I"/>
    <property type="match status" value="1"/>
</dbReference>
<dbReference type="Pfam" id="PF01470">
    <property type="entry name" value="Peptidase_C15"/>
    <property type="match status" value="1"/>
</dbReference>
<dbReference type="PIRSF" id="PIRSF015592">
    <property type="entry name" value="Prld-crbxl_pptds"/>
    <property type="match status" value="1"/>
</dbReference>
<dbReference type="PRINTS" id="PR00706">
    <property type="entry name" value="PYROGLUPTASE"/>
</dbReference>
<dbReference type="SUPFAM" id="SSF53182">
    <property type="entry name" value="Pyrrolidone carboxyl peptidase (pyroglutamate aminopeptidase)"/>
    <property type="match status" value="1"/>
</dbReference>
<dbReference type="PROSITE" id="PS01334">
    <property type="entry name" value="PYRASE_CYS"/>
    <property type="match status" value="1"/>
</dbReference>
<dbReference type="PROSITE" id="PS01333">
    <property type="entry name" value="PYRASE_GLU"/>
    <property type="match status" value="1"/>
</dbReference>
<organism>
    <name type="scientific">Halalkalibacterium halodurans (strain ATCC BAA-125 / DSM 18197 / FERM 7344 / JCM 9153 / C-125)</name>
    <name type="common">Bacillus halodurans</name>
    <dbReference type="NCBI Taxonomy" id="272558"/>
    <lineage>
        <taxon>Bacteria</taxon>
        <taxon>Bacillati</taxon>
        <taxon>Bacillota</taxon>
        <taxon>Bacilli</taxon>
        <taxon>Bacillales</taxon>
        <taxon>Bacillaceae</taxon>
        <taxon>Halalkalibacterium (ex Joshi et al. 2022)</taxon>
    </lineage>
</organism>
<keyword id="KW-0963">Cytoplasm</keyword>
<keyword id="KW-0378">Hydrolase</keyword>
<keyword id="KW-0645">Protease</keyword>
<keyword id="KW-1185">Reference proteome</keyword>
<keyword id="KW-0788">Thiol protease</keyword>
<accession>Q9K6U4</accession>
<comment type="function">
    <text evidence="1">Removes 5-oxoproline from various penultimate amino acid residues except L-proline.</text>
</comment>
<comment type="catalytic activity">
    <reaction>
        <text>Release of an N-terminal pyroglutamyl group from a polypeptide, the second amino acid generally not being Pro.</text>
        <dbReference type="EC" id="3.4.19.3"/>
    </reaction>
</comment>
<comment type="subunit">
    <text evidence="1">Homotetramer.</text>
</comment>
<comment type="subcellular location">
    <subcellularLocation>
        <location evidence="1">Cytoplasm</location>
    </subcellularLocation>
</comment>
<comment type="similarity">
    <text evidence="2">Belongs to the peptidase C15 family.</text>
</comment>
<reference key="1">
    <citation type="journal article" date="2000" name="Nucleic Acids Res.">
        <title>Complete genome sequence of the alkaliphilic bacterium Bacillus halodurans and genomic sequence comparison with Bacillus subtilis.</title>
        <authorList>
            <person name="Takami H."/>
            <person name="Nakasone K."/>
            <person name="Takaki Y."/>
            <person name="Maeno G."/>
            <person name="Sasaki R."/>
            <person name="Masui N."/>
            <person name="Fuji F."/>
            <person name="Hirama C."/>
            <person name="Nakamura Y."/>
            <person name="Ogasawara N."/>
            <person name="Kuhara S."/>
            <person name="Horikoshi K."/>
        </authorList>
    </citation>
    <scope>NUCLEOTIDE SEQUENCE [LARGE SCALE GENOMIC DNA]</scope>
    <source>
        <strain>ATCC BAA-125 / DSM 18197 / FERM 7344 / JCM 9153 / C-125</strain>
    </source>
</reference>
<sequence length="201" mass="22181">MGNIILLTGFQPFLDYSINPTEAIVKELNGRKIGEYEVRGVILPVSFRESGDLLLHHFQTVQPTAVFMLGLAAGRGKITPERVAININSGPEDRDGIAPVDEPIRQGGPAAYFSTLPVRRLIQRLNEEGFPAEMSNSAGTYVCNHVMYRMLDYLHEKGSEQVAAGFVHLPASKELAAQHHSLPSMDLKDLTRAVTLMIEEL</sequence>
<feature type="chain" id="PRO_0000184711" description="Pyrrolidone-carboxylate peptidase">
    <location>
        <begin position="1"/>
        <end position="201"/>
    </location>
</feature>
<feature type="active site" evidence="1">
    <location>
        <position position="81"/>
    </location>
</feature>
<feature type="active site" evidence="1">
    <location>
        <position position="143"/>
    </location>
</feature>
<feature type="active site" evidence="1">
    <location>
        <position position="168"/>
    </location>
</feature>
<protein>
    <recommendedName>
        <fullName>Pyrrolidone-carboxylate peptidase</fullName>
        <ecNumber>3.4.19.3</ecNumber>
    </recommendedName>
    <alternativeName>
        <fullName>5-oxoprolyl-peptidase</fullName>
    </alternativeName>
    <alternativeName>
        <fullName>Pyroglutamyl-peptidase I</fullName>
        <shortName>PGP-I</shortName>
        <shortName>Pyrase</shortName>
    </alternativeName>
</protein>
<name>PCP_HALH5</name>